<reference key="1">
    <citation type="journal article" date="2001" name="Science">
        <title>Comparative genomics of Listeria species.</title>
        <authorList>
            <person name="Glaser P."/>
            <person name="Frangeul L."/>
            <person name="Buchrieser C."/>
            <person name="Rusniok C."/>
            <person name="Amend A."/>
            <person name="Baquero F."/>
            <person name="Berche P."/>
            <person name="Bloecker H."/>
            <person name="Brandt P."/>
            <person name="Chakraborty T."/>
            <person name="Charbit A."/>
            <person name="Chetouani F."/>
            <person name="Couve E."/>
            <person name="de Daruvar A."/>
            <person name="Dehoux P."/>
            <person name="Domann E."/>
            <person name="Dominguez-Bernal G."/>
            <person name="Duchaud E."/>
            <person name="Durant L."/>
            <person name="Dussurget O."/>
            <person name="Entian K.-D."/>
            <person name="Fsihi H."/>
            <person name="Garcia-del Portillo F."/>
            <person name="Garrido P."/>
            <person name="Gautier L."/>
            <person name="Goebel W."/>
            <person name="Gomez-Lopez N."/>
            <person name="Hain T."/>
            <person name="Hauf J."/>
            <person name="Jackson D."/>
            <person name="Jones L.-M."/>
            <person name="Kaerst U."/>
            <person name="Kreft J."/>
            <person name="Kuhn M."/>
            <person name="Kunst F."/>
            <person name="Kurapkat G."/>
            <person name="Madueno E."/>
            <person name="Maitournam A."/>
            <person name="Mata Vicente J."/>
            <person name="Ng E."/>
            <person name="Nedjari H."/>
            <person name="Nordsiek G."/>
            <person name="Novella S."/>
            <person name="de Pablos B."/>
            <person name="Perez-Diaz J.-C."/>
            <person name="Purcell R."/>
            <person name="Remmel B."/>
            <person name="Rose M."/>
            <person name="Schlueter T."/>
            <person name="Simoes N."/>
            <person name="Tierrez A."/>
            <person name="Vazquez-Boland J.-A."/>
            <person name="Voss H."/>
            <person name="Wehland J."/>
            <person name="Cossart P."/>
        </authorList>
    </citation>
    <scope>NUCLEOTIDE SEQUENCE [LARGE SCALE GENOMIC DNA]</scope>
    <source>
        <strain>ATCC BAA-679 / EGD-e</strain>
    </source>
</reference>
<evidence type="ECO:0000255" key="1">
    <source>
        <dbReference type="HAMAP-Rule" id="MF_01366"/>
    </source>
</evidence>
<evidence type="ECO:0000305" key="2"/>
<evidence type="ECO:0007829" key="3">
    <source>
        <dbReference type="PDB" id="8A57"/>
    </source>
</evidence>
<name>RL13_LISMO</name>
<accession>Q8Y458</accession>
<keyword id="KW-0002">3D-structure</keyword>
<keyword id="KW-1185">Reference proteome</keyword>
<keyword id="KW-0687">Ribonucleoprotein</keyword>
<keyword id="KW-0689">Ribosomal protein</keyword>
<proteinExistence type="evidence at protein level"/>
<comment type="function">
    <text evidence="1">This protein is one of the early assembly proteins of the 50S ribosomal subunit, although it is not seen to bind rRNA by itself. It is important during the early stages of 50S assembly.</text>
</comment>
<comment type="subunit">
    <text evidence="1">Part of the 50S ribosomal subunit.</text>
</comment>
<comment type="similarity">
    <text evidence="1">Belongs to the universal ribosomal protein uL13 family.</text>
</comment>
<gene>
    <name evidence="1" type="primary">rplM</name>
    <name type="ordered locus">lmo2597</name>
</gene>
<feature type="chain" id="PRO_0000261744" description="Large ribosomal subunit protein uL13">
    <location>
        <begin position="1"/>
        <end position="145"/>
    </location>
</feature>
<feature type="turn" evidence="3">
    <location>
        <begin position="9"/>
        <end position="11"/>
    </location>
</feature>
<feature type="strand" evidence="3">
    <location>
        <begin position="16"/>
        <end position="20"/>
    </location>
</feature>
<feature type="helix" evidence="3">
    <location>
        <begin position="26"/>
        <end position="38"/>
    </location>
</feature>
<feature type="turn" evidence="3">
    <location>
        <begin position="39"/>
        <end position="41"/>
    </location>
</feature>
<feature type="turn" evidence="3">
    <location>
        <begin position="47"/>
        <end position="49"/>
    </location>
</feature>
<feature type="strand" evidence="3">
    <location>
        <begin position="54"/>
        <end position="58"/>
    </location>
</feature>
<feature type="helix" evidence="3">
    <location>
        <begin position="60"/>
        <end position="62"/>
    </location>
</feature>
<feature type="helix" evidence="3">
    <location>
        <begin position="69"/>
        <end position="72"/>
    </location>
</feature>
<feature type="strand" evidence="3">
    <location>
        <begin position="74"/>
        <end position="78"/>
    </location>
</feature>
<feature type="strand" evidence="3">
    <location>
        <begin position="85"/>
        <end position="89"/>
    </location>
</feature>
<feature type="helix" evidence="3">
    <location>
        <begin position="90"/>
        <end position="96"/>
    </location>
</feature>
<feature type="helix" evidence="3">
    <location>
        <begin position="98"/>
        <end position="107"/>
    </location>
</feature>
<feature type="helix" evidence="3">
    <location>
        <begin position="114"/>
        <end position="120"/>
    </location>
</feature>
<feature type="strand" evidence="3">
    <location>
        <begin position="123"/>
        <end position="125"/>
    </location>
</feature>
<feature type="strand" evidence="3">
    <location>
        <begin position="127"/>
        <end position="129"/>
    </location>
</feature>
<feature type="helix" evidence="3">
    <location>
        <begin position="134"/>
        <end position="136"/>
    </location>
</feature>
<sequence length="145" mass="16200">MRTTYMAKPGEVERKWYVIDATGVSLGRLSSEVASILRGKNKPQFTPHIDTGDFVIIINAGKIGLTGKKATDKIYYRHSQYPGGLKSRTAGEMRTNNPEKLLELSIKGMLPKNSLGRQLFKKLHVYGGSEHEHAAQQPEVYELRG</sequence>
<dbReference type="EMBL" id="AL591983">
    <property type="protein sequence ID" value="CAD00675.1"/>
    <property type="molecule type" value="Genomic_DNA"/>
</dbReference>
<dbReference type="PIR" id="AE1399">
    <property type="entry name" value="AE1399"/>
</dbReference>
<dbReference type="RefSeq" id="NP_466120.1">
    <property type="nucleotide sequence ID" value="NC_003210.1"/>
</dbReference>
<dbReference type="RefSeq" id="WP_003727703.1">
    <property type="nucleotide sequence ID" value="NZ_CP149495.1"/>
</dbReference>
<dbReference type="PDB" id="7NHN">
    <property type="method" value="EM"/>
    <property type="resolution" value="2.90 A"/>
    <property type="chains" value="M=1-145"/>
</dbReference>
<dbReference type="PDB" id="8A57">
    <property type="method" value="EM"/>
    <property type="resolution" value="2.30 A"/>
    <property type="chains" value="M=1-145"/>
</dbReference>
<dbReference type="PDB" id="8A5I">
    <property type="method" value="EM"/>
    <property type="resolution" value="2.30 A"/>
    <property type="chains" value="M=1-145"/>
</dbReference>
<dbReference type="PDB" id="8A63">
    <property type="method" value="EM"/>
    <property type="resolution" value="3.10 A"/>
    <property type="chains" value="M=1-145"/>
</dbReference>
<dbReference type="PDBsum" id="7NHN"/>
<dbReference type="PDBsum" id="8A57"/>
<dbReference type="PDBsum" id="8A5I"/>
<dbReference type="PDBsum" id="8A63"/>
<dbReference type="EMDB" id="EMD-12334"/>
<dbReference type="EMDB" id="EMD-15161"/>
<dbReference type="EMDB" id="EMD-15175"/>
<dbReference type="EMDB" id="EMD-15204"/>
<dbReference type="SMR" id="Q8Y458"/>
<dbReference type="STRING" id="169963.gene:17595315"/>
<dbReference type="PaxDb" id="169963-lmo2597"/>
<dbReference type="EnsemblBacteria" id="CAD00675">
    <property type="protein sequence ID" value="CAD00675"/>
    <property type="gene ID" value="CAD00675"/>
</dbReference>
<dbReference type="GeneID" id="61190471"/>
<dbReference type="GeneID" id="984622"/>
<dbReference type="KEGG" id="lmo:lmo2597"/>
<dbReference type="PATRIC" id="fig|169963.11.peg.2661"/>
<dbReference type="eggNOG" id="COG0102">
    <property type="taxonomic scope" value="Bacteria"/>
</dbReference>
<dbReference type="HOGENOM" id="CLU_082184_2_2_9"/>
<dbReference type="OrthoDB" id="9801330at2"/>
<dbReference type="PhylomeDB" id="Q8Y458"/>
<dbReference type="BioCyc" id="LMON169963:LMO2597-MONOMER"/>
<dbReference type="Proteomes" id="UP000000817">
    <property type="component" value="Chromosome"/>
</dbReference>
<dbReference type="GO" id="GO:0022625">
    <property type="term" value="C:cytosolic large ribosomal subunit"/>
    <property type="evidence" value="ECO:0000318"/>
    <property type="project" value="GO_Central"/>
</dbReference>
<dbReference type="GO" id="GO:0005840">
    <property type="term" value="C:ribosome"/>
    <property type="evidence" value="ECO:0000318"/>
    <property type="project" value="GO_Central"/>
</dbReference>
<dbReference type="GO" id="GO:0003729">
    <property type="term" value="F:mRNA binding"/>
    <property type="evidence" value="ECO:0000318"/>
    <property type="project" value="GO_Central"/>
</dbReference>
<dbReference type="GO" id="GO:0003735">
    <property type="term" value="F:structural constituent of ribosome"/>
    <property type="evidence" value="ECO:0000318"/>
    <property type="project" value="GO_Central"/>
</dbReference>
<dbReference type="GO" id="GO:0017148">
    <property type="term" value="P:negative regulation of translation"/>
    <property type="evidence" value="ECO:0000318"/>
    <property type="project" value="GO_Central"/>
</dbReference>
<dbReference type="GO" id="GO:0006412">
    <property type="term" value="P:translation"/>
    <property type="evidence" value="ECO:0007669"/>
    <property type="project" value="UniProtKB-UniRule"/>
</dbReference>
<dbReference type="CDD" id="cd00392">
    <property type="entry name" value="Ribosomal_L13"/>
    <property type="match status" value="1"/>
</dbReference>
<dbReference type="FunFam" id="3.90.1180.10:FF:000001">
    <property type="entry name" value="50S ribosomal protein L13"/>
    <property type="match status" value="1"/>
</dbReference>
<dbReference type="Gene3D" id="3.90.1180.10">
    <property type="entry name" value="Ribosomal protein L13"/>
    <property type="match status" value="1"/>
</dbReference>
<dbReference type="HAMAP" id="MF_01366">
    <property type="entry name" value="Ribosomal_uL13"/>
    <property type="match status" value="1"/>
</dbReference>
<dbReference type="InterPro" id="IPR005822">
    <property type="entry name" value="Ribosomal_uL13"/>
</dbReference>
<dbReference type="InterPro" id="IPR005823">
    <property type="entry name" value="Ribosomal_uL13_bac-type"/>
</dbReference>
<dbReference type="InterPro" id="IPR023563">
    <property type="entry name" value="Ribosomal_uL13_CS"/>
</dbReference>
<dbReference type="InterPro" id="IPR036899">
    <property type="entry name" value="Ribosomal_uL13_sf"/>
</dbReference>
<dbReference type="NCBIfam" id="TIGR01066">
    <property type="entry name" value="rplM_bact"/>
    <property type="match status" value="1"/>
</dbReference>
<dbReference type="PANTHER" id="PTHR11545:SF2">
    <property type="entry name" value="LARGE RIBOSOMAL SUBUNIT PROTEIN UL13M"/>
    <property type="match status" value="1"/>
</dbReference>
<dbReference type="PANTHER" id="PTHR11545">
    <property type="entry name" value="RIBOSOMAL PROTEIN L13"/>
    <property type="match status" value="1"/>
</dbReference>
<dbReference type="Pfam" id="PF00572">
    <property type="entry name" value="Ribosomal_L13"/>
    <property type="match status" value="1"/>
</dbReference>
<dbReference type="PIRSF" id="PIRSF002181">
    <property type="entry name" value="Ribosomal_L13"/>
    <property type="match status" value="1"/>
</dbReference>
<dbReference type="SUPFAM" id="SSF52161">
    <property type="entry name" value="Ribosomal protein L13"/>
    <property type="match status" value="1"/>
</dbReference>
<dbReference type="PROSITE" id="PS00783">
    <property type="entry name" value="RIBOSOMAL_L13"/>
    <property type="match status" value="1"/>
</dbReference>
<protein>
    <recommendedName>
        <fullName evidence="1">Large ribosomal subunit protein uL13</fullName>
    </recommendedName>
    <alternativeName>
        <fullName evidence="2">50S ribosomal protein L13</fullName>
    </alternativeName>
</protein>
<organism>
    <name type="scientific">Listeria monocytogenes serovar 1/2a (strain ATCC BAA-679 / EGD-e)</name>
    <dbReference type="NCBI Taxonomy" id="169963"/>
    <lineage>
        <taxon>Bacteria</taxon>
        <taxon>Bacillati</taxon>
        <taxon>Bacillota</taxon>
        <taxon>Bacilli</taxon>
        <taxon>Bacillales</taxon>
        <taxon>Listeriaceae</taxon>
        <taxon>Listeria</taxon>
    </lineage>
</organism>